<keyword id="KW-0067">ATP-binding</keyword>
<keyword id="KW-0418">Kinase</keyword>
<keyword id="KW-0460">Magnesium</keyword>
<keyword id="KW-0479">Metal-binding</keyword>
<keyword id="KW-0547">Nucleotide-binding</keyword>
<keyword id="KW-1185">Reference proteome</keyword>
<keyword id="KW-0784">Thiamine biosynthesis</keyword>
<keyword id="KW-0808">Transferase</keyword>
<gene>
    <name evidence="1" type="primary">thiM</name>
    <name type="ordered locus">Daud_0479</name>
</gene>
<organism>
    <name type="scientific">Desulforudis audaxviator (strain MP104C)</name>
    <dbReference type="NCBI Taxonomy" id="477974"/>
    <lineage>
        <taxon>Bacteria</taxon>
        <taxon>Bacillati</taxon>
        <taxon>Bacillota</taxon>
        <taxon>Clostridia</taxon>
        <taxon>Thermoanaerobacterales</taxon>
        <taxon>Candidatus Desulforudaceae</taxon>
        <taxon>Candidatus Desulforudis</taxon>
    </lineage>
</organism>
<dbReference type="EC" id="2.7.1.50" evidence="1"/>
<dbReference type="EMBL" id="CP000860">
    <property type="protein sequence ID" value="ACA59025.1"/>
    <property type="molecule type" value="Genomic_DNA"/>
</dbReference>
<dbReference type="RefSeq" id="WP_012301614.1">
    <property type="nucleotide sequence ID" value="NC_010424.1"/>
</dbReference>
<dbReference type="SMR" id="B1I1S3"/>
<dbReference type="STRING" id="477974.Daud_0479"/>
<dbReference type="KEGG" id="dau:Daud_0479"/>
<dbReference type="eggNOG" id="COG2145">
    <property type="taxonomic scope" value="Bacteria"/>
</dbReference>
<dbReference type="HOGENOM" id="CLU_019943_0_1_9"/>
<dbReference type="OrthoDB" id="9778146at2"/>
<dbReference type="UniPathway" id="UPA00060">
    <property type="reaction ID" value="UER00139"/>
</dbReference>
<dbReference type="Proteomes" id="UP000008544">
    <property type="component" value="Chromosome"/>
</dbReference>
<dbReference type="GO" id="GO:0005524">
    <property type="term" value="F:ATP binding"/>
    <property type="evidence" value="ECO:0007669"/>
    <property type="project" value="UniProtKB-UniRule"/>
</dbReference>
<dbReference type="GO" id="GO:0004417">
    <property type="term" value="F:hydroxyethylthiazole kinase activity"/>
    <property type="evidence" value="ECO:0007669"/>
    <property type="project" value="UniProtKB-UniRule"/>
</dbReference>
<dbReference type="GO" id="GO:0000287">
    <property type="term" value="F:magnesium ion binding"/>
    <property type="evidence" value="ECO:0007669"/>
    <property type="project" value="UniProtKB-UniRule"/>
</dbReference>
<dbReference type="GO" id="GO:0009228">
    <property type="term" value="P:thiamine biosynthetic process"/>
    <property type="evidence" value="ECO:0007669"/>
    <property type="project" value="UniProtKB-KW"/>
</dbReference>
<dbReference type="GO" id="GO:0009229">
    <property type="term" value="P:thiamine diphosphate biosynthetic process"/>
    <property type="evidence" value="ECO:0007669"/>
    <property type="project" value="UniProtKB-UniRule"/>
</dbReference>
<dbReference type="CDD" id="cd01170">
    <property type="entry name" value="THZ_kinase"/>
    <property type="match status" value="1"/>
</dbReference>
<dbReference type="Gene3D" id="3.40.1190.20">
    <property type="match status" value="1"/>
</dbReference>
<dbReference type="HAMAP" id="MF_00228">
    <property type="entry name" value="Thz_kinase"/>
    <property type="match status" value="1"/>
</dbReference>
<dbReference type="InterPro" id="IPR000417">
    <property type="entry name" value="Hyethyz_kinase"/>
</dbReference>
<dbReference type="InterPro" id="IPR029056">
    <property type="entry name" value="Ribokinase-like"/>
</dbReference>
<dbReference type="NCBIfam" id="NF006830">
    <property type="entry name" value="PRK09355.1"/>
    <property type="match status" value="1"/>
</dbReference>
<dbReference type="NCBIfam" id="TIGR00694">
    <property type="entry name" value="thiM"/>
    <property type="match status" value="1"/>
</dbReference>
<dbReference type="Pfam" id="PF02110">
    <property type="entry name" value="HK"/>
    <property type="match status" value="1"/>
</dbReference>
<dbReference type="PIRSF" id="PIRSF000513">
    <property type="entry name" value="Thz_kinase"/>
    <property type="match status" value="1"/>
</dbReference>
<dbReference type="PRINTS" id="PR01099">
    <property type="entry name" value="HYETHTZKNASE"/>
</dbReference>
<dbReference type="SUPFAM" id="SSF53613">
    <property type="entry name" value="Ribokinase-like"/>
    <property type="match status" value="1"/>
</dbReference>
<name>THIM_DESAP</name>
<proteinExistence type="inferred from homology"/>
<feature type="chain" id="PRO_0000383852" description="Hydroxyethylthiazole kinase">
    <location>
        <begin position="1"/>
        <end position="273"/>
    </location>
</feature>
<feature type="binding site" evidence="1">
    <location>
        <position position="49"/>
    </location>
    <ligand>
        <name>substrate</name>
    </ligand>
</feature>
<feature type="binding site" evidence="1">
    <location>
        <position position="125"/>
    </location>
    <ligand>
        <name>ATP</name>
        <dbReference type="ChEBI" id="CHEBI:30616"/>
    </ligand>
</feature>
<feature type="binding site" evidence="1">
    <location>
        <position position="171"/>
    </location>
    <ligand>
        <name>ATP</name>
        <dbReference type="ChEBI" id="CHEBI:30616"/>
    </ligand>
</feature>
<feature type="binding site" evidence="1">
    <location>
        <position position="198"/>
    </location>
    <ligand>
        <name>substrate</name>
    </ligand>
</feature>
<sequence length="273" mass="28219">MNVSELRLRFANALARIRATKPLVHHITNYVVMNDTANVTLHVGALPVMAHTTEEAAEMTGLAGALVLNIGTLSPAWVDAMLLAGRRANESGIPVVLDPVGAGATAYRTETCLRLLGGLRVAVIRGNSGEIGTLSGAGGVVRGVESVEGVANPAAAAGVLAHRYNTVTVITGQRDIVTDGGRVLVVDNGHEWLTTITGSGCMATALVAAFAAVEPDFLVAAAGALAAYGLAAELAAREARGPASFRTALLDRIYSLTPEQVAEGARVERLRQP</sequence>
<reference key="1">
    <citation type="submission" date="2007-10" db="EMBL/GenBank/DDBJ databases">
        <title>Complete sequence of chromosome of Desulforudis audaxviator MP104C.</title>
        <authorList>
            <person name="Copeland A."/>
            <person name="Lucas S."/>
            <person name="Lapidus A."/>
            <person name="Barry K."/>
            <person name="Glavina del Rio T."/>
            <person name="Dalin E."/>
            <person name="Tice H."/>
            <person name="Bruce D."/>
            <person name="Pitluck S."/>
            <person name="Lowry S.R."/>
            <person name="Larimer F."/>
            <person name="Land M.L."/>
            <person name="Hauser L."/>
            <person name="Kyrpides N."/>
            <person name="Ivanova N.N."/>
            <person name="Richardson P."/>
        </authorList>
    </citation>
    <scope>NUCLEOTIDE SEQUENCE [LARGE SCALE GENOMIC DNA]</scope>
    <source>
        <strain>MP104C</strain>
    </source>
</reference>
<accession>B1I1S3</accession>
<evidence type="ECO:0000255" key="1">
    <source>
        <dbReference type="HAMAP-Rule" id="MF_00228"/>
    </source>
</evidence>
<comment type="function">
    <text evidence="1">Catalyzes the phosphorylation of the hydroxyl group of 4-methyl-5-beta-hydroxyethylthiazole (THZ).</text>
</comment>
<comment type="catalytic activity">
    <reaction evidence="1">
        <text>5-(2-hydroxyethyl)-4-methylthiazole + ATP = 4-methyl-5-(2-phosphooxyethyl)-thiazole + ADP + H(+)</text>
        <dbReference type="Rhea" id="RHEA:24212"/>
        <dbReference type="ChEBI" id="CHEBI:15378"/>
        <dbReference type="ChEBI" id="CHEBI:17957"/>
        <dbReference type="ChEBI" id="CHEBI:30616"/>
        <dbReference type="ChEBI" id="CHEBI:58296"/>
        <dbReference type="ChEBI" id="CHEBI:456216"/>
        <dbReference type="EC" id="2.7.1.50"/>
    </reaction>
</comment>
<comment type="cofactor">
    <cofactor evidence="1">
        <name>Mg(2+)</name>
        <dbReference type="ChEBI" id="CHEBI:18420"/>
    </cofactor>
</comment>
<comment type="pathway">
    <text evidence="1">Cofactor biosynthesis; thiamine diphosphate biosynthesis; 4-methyl-5-(2-phosphoethyl)-thiazole from 5-(2-hydroxyethyl)-4-methylthiazole: step 1/1.</text>
</comment>
<comment type="similarity">
    <text evidence="1">Belongs to the Thz kinase family.</text>
</comment>
<protein>
    <recommendedName>
        <fullName evidence="1">Hydroxyethylthiazole kinase</fullName>
        <ecNumber evidence="1">2.7.1.50</ecNumber>
    </recommendedName>
    <alternativeName>
        <fullName evidence="1">4-methyl-5-beta-hydroxyethylthiazole kinase</fullName>
        <shortName evidence="1">TH kinase</shortName>
        <shortName evidence="1">Thz kinase</shortName>
    </alternativeName>
</protein>